<accession>A0QW25</accession>
<accession>I7G7E8</accession>
<organism>
    <name type="scientific">Mycolicibacterium smegmatis (strain ATCC 700084 / mc(2)155)</name>
    <name type="common">Mycobacterium smegmatis</name>
    <dbReference type="NCBI Taxonomy" id="246196"/>
    <lineage>
        <taxon>Bacteria</taxon>
        <taxon>Bacillati</taxon>
        <taxon>Actinomycetota</taxon>
        <taxon>Actinomycetes</taxon>
        <taxon>Mycobacteriales</taxon>
        <taxon>Mycobacteriaceae</taxon>
        <taxon>Mycolicibacterium</taxon>
    </lineage>
</organism>
<dbReference type="EC" id="1.3.98.5" evidence="1"/>
<dbReference type="EMBL" id="CP000480">
    <property type="protein sequence ID" value="ABK71061.1"/>
    <property type="molecule type" value="Genomic_DNA"/>
</dbReference>
<dbReference type="EMBL" id="CP001663">
    <property type="protein sequence ID" value="AFP39181.1"/>
    <property type="molecule type" value="Genomic_DNA"/>
</dbReference>
<dbReference type="RefSeq" id="YP_887113.1">
    <property type="nucleotide sequence ID" value="NC_008596.1"/>
</dbReference>
<dbReference type="SMR" id="A0QW25"/>
<dbReference type="STRING" id="246196.MSMEG_2782"/>
<dbReference type="PaxDb" id="246196-MSMEI_2713"/>
<dbReference type="KEGG" id="msb:LJ00_13830"/>
<dbReference type="KEGG" id="msg:MSMEI_2713"/>
<dbReference type="KEGG" id="msm:MSMEG_2782"/>
<dbReference type="PATRIC" id="fig|246196.19.peg.2750"/>
<dbReference type="eggNOG" id="COG3253">
    <property type="taxonomic scope" value="Bacteria"/>
</dbReference>
<dbReference type="OrthoDB" id="9773646at2"/>
<dbReference type="UniPathway" id="UPA00252"/>
<dbReference type="Proteomes" id="UP000000757">
    <property type="component" value="Chromosome"/>
</dbReference>
<dbReference type="Proteomes" id="UP000006158">
    <property type="component" value="Chromosome"/>
</dbReference>
<dbReference type="GO" id="GO:0020037">
    <property type="term" value="F:heme binding"/>
    <property type="evidence" value="ECO:0007669"/>
    <property type="project" value="InterPro"/>
</dbReference>
<dbReference type="GO" id="GO:0046872">
    <property type="term" value="F:metal ion binding"/>
    <property type="evidence" value="ECO:0007669"/>
    <property type="project" value="UniProtKB-KW"/>
</dbReference>
<dbReference type="GO" id="GO:0016634">
    <property type="term" value="F:oxidoreductase activity, acting on the CH-CH group of donors, oxygen as acceptor"/>
    <property type="evidence" value="ECO:0007669"/>
    <property type="project" value="UniProtKB-UniRule"/>
</dbReference>
<dbReference type="GO" id="GO:0006785">
    <property type="term" value="P:heme B biosynthetic process"/>
    <property type="evidence" value="ECO:0007669"/>
    <property type="project" value="UniProtKB-UniRule"/>
</dbReference>
<dbReference type="FunFam" id="3.30.70.1030:FF:000001">
    <property type="entry name" value="Chlorite dismutase"/>
    <property type="match status" value="1"/>
</dbReference>
<dbReference type="Gene3D" id="3.30.70.1030">
    <property type="entry name" value="Apc35880, domain 1"/>
    <property type="match status" value="2"/>
</dbReference>
<dbReference type="HAMAP" id="MF_02244">
    <property type="entry name" value="Coproheme_decarbox_2"/>
    <property type="match status" value="1"/>
</dbReference>
<dbReference type="InterPro" id="IPR010644">
    <property type="entry name" value="ChdC/CLD"/>
</dbReference>
<dbReference type="InterPro" id="IPR011008">
    <property type="entry name" value="Dimeric_a/b-barrel"/>
</dbReference>
<dbReference type="NCBIfam" id="NF042928">
    <property type="entry name" value="HemQ_actino"/>
    <property type="match status" value="1"/>
</dbReference>
<dbReference type="PANTHER" id="PTHR36843:SF1">
    <property type="entry name" value="COPROHEME DECARBOXYLASE"/>
    <property type="match status" value="1"/>
</dbReference>
<dbReference type="PANTHER" id="PTHR36843">
    <property type="entry name" value="HEME-DEPENDENT PEROXIDASE YWFI-RELATED"/>
    <property type="match status" value="1"/>
</dbReference>
<dbReference type="Pfam" id="PF06778">
    <property type="entry name" value="Chlor_dismutase"/>
    <property type="match status" value="1"/>
</dbReference>
<dbReference type="SUPFAM" id="SSF54909">
    <property type="entry name" value="Dimeric alpha+beta barrel"/>
    <property type="match status" value="1"/>
</dbReference>
<evidence type="ECO:0000255" key="1">
    <source>
        <dbReference type="HAMAP-Rule" id="MF_02244"/>
    </source>
</evidence>
<evidence type="ECO:0000269" key="2">
    <source>
    </source>
</evidence>
<sequence>MAKLDFDALNSTIRYLMFSVFAVAPGELGEDRADVIDEAATFLKQQEDKGVVVRGLYDVAGLRADADFMIWTHADNVEALQSTYSDFRRTTALGRISDPVWSSVALHRPAEFNKSHIPAFLAGEEPGNYICVYPFVRSYEWYLLPDEERRRMLSEHGMAARGYKDVRANTVPAFALGDYEWILAFEAPELHRIVDLMRDLRATDARRHTREETPFFTGPRISVENLIAKLP</sequence>
<reference key="1">
    <citation type="submission" date="2006-10" db="EMBL/GenBank/DDBJ databases">
        <authorList>
            <person name="Fleischmann R.D."/>
            <person name="Dodson R.J."/>
            <person name="Haft D.H."/>
            <person name="Merkel J.S."/>
            <person name="Nelson W.C."/>
            <person name="Fraser C.M."/>
        </authorList>
    </citation>
    <scope>NUCLEOTIDE SEQUENCE [LARGE SCALE GENOMIC DNA]</scope>
    <source>
        <strain>ATCC 700084 / mc(2)155</strain>
    </source>
</reference>
<reference key="2">
    <citation type="journal article" date="2007" name="Genome Biol.">
        <title>Interrupted coding sequences in Mycobacterium smegmatis: authentic mutations or sequencing errors?</title>
        <authorList>
            <person name="Deshayes C."/>
            <person name="Perrodou E."/>
            <person name="Gallien S."/>
            <person name="Euphrasie D."/>
            <person name="Schaeffer C."/>
            <person name="Van-Dorsselaer A."/>
            <person name="Poch O."/>
            <person name="Lecompte O."/>
            <person name="Reyrat J.-M."/>
        </authorList>
    </citation>
    <scope>NUCLEOTIDE SEQUENCE [LARGE SCALE GENOMIC DNA]</scope>
    <source>
        <strain>ATCC 700084 / mc(2)155</strain>
    </source>
</reference>
<reference key="3">
    <citation type="journal article" date="2009" name="Genome Res.">
        <title>Ortho-proteogenomics: multiple proteomes investigation through orthology and a new MS-based protocol.</title>
        <authorList>
            <person name="Gallien S."/>
            <person name="Perrodou E."/>
            <person name="Carapito C."/>
            <person name="Deshayes C."/>
            <person name="Reyrat J.-M."/>
            <person name="Van Dorsselaer A."/>
            <person name="Poch O."/>
            <person name="Schaeffer C."/>
            <person name="Lecompte O."/>
        </authorList>
    </citation>
    <scope>NUCLEOTIDE SEQUENCE [LARGE SCALE GENOMIC DNA]</scope>
    <source>
        <strain>ATCC 700084 / mc(2)155</strain>
    </source>
</reference>
<reference key="4">
    <citation type="journal article" date="2010" name="Mol. Biosyst.">
        <title>Expansion of the mycobacterial 'PUPylome'.</title>
        <authorList>
            <person name="Watrous J."/>
            <person name="Burns K."/>
            <person name="Liu W.T."/>
            <person name="Patel A."/>
            <person name="Hook V."/>
            <person name="Bafna V."/>
            <person name="Barry C.E. III"/>
            <person name="Bark S."/>
            <person name="Dorrestein P.C."/>
        </authorList>
    </citation>
    <scope>PUPYLATION AT LYS-44</scope>
    <scope>IDENTIFICATION BY MASS SPECTROMETRY</scope>
</reference>
<comment type="function">
    <text evidence="1">Involved in coproporphyrin-dependent heme b biosynthesis. Catalyzes the decarboxylation of Fe-coproporphyrin III (coproheme) to heme b (protoheme IX), the last step of the pathway. The reaction occurs in a stepwise manner with a three-propionate intermediate.</text>
</comment>
<comment type="catalytic activity">
    <reaction evidence="1">
        <text>Fe-coproporphyrin III + 2 H2O2 + 2 H(+) = heme b + 2 CO2 + 4 H2O</text>
        <dbReference type="Rhea" id="RHEA:56516"/>
        <dbReference type="ChEBI" id="CHEBI:15377"/>
        <dbReference type="ChEBI" id="CHEBI:15378"/>
        <dbReference type="ChEBI" id="CHEBI:16240"/>
        <dbReference type="ChEBI" id="CHEBI:16526"/>
        <dbReference type="ChEBI" id="CHEBI:60344"/>
        <dbReference type="ChEBI" id="CHEBI:68438"/>
        <dbReference type="EC" id="1.3.98.5"/>
    </reaction>
    <physiologicalReaction direction="left-to-right" evidence="1">
        <dbReference type="Rhea" id="RHEA:56517"/>
    </physiologicalReaction>
</comment>
<comment type="catalytic activity">
    <reaction evidence="1">
        <text>Fe-coproporphyrin III + H2O2 + H(+) = harderoheme III + CO2 + 2 H2O</text>
        <dbReference type="Rhea" id="RHEA:57940"/>
        <dbReference type="ChEBI" id="CHEBI:15377"/>
        <dbReference type="ChEBI" id="CHEBI:15378"/>
        <dbReference type="ChEBI" id="CHEBI:16240"/>
        <dbReference type="ChEBI" id="CHEBI:16526"/>
        <dbReference type="ChEBI" id="CHEBI:68438"/>
        <dbReference type="ChEBI" id="CHEBI:142463"/>
    </reaction>
    <physiologicalReaction direction="left-to-right" evidence="1">
        <dbReference type="Rhea" id="RHEA:57941"/>
    </physiologicalReaction>
</comment>
<comment type="catalytic activity">
    <reaction evidence="1">
        <text>harderoheme III + H2O2 + H(+) = heme b + CO2 + 2 H2O</text>
        <dbReference type="Rhea" id="RHEA:57944"/>
        <dbReference type="ChEBI" id="CHEBI:15377"/>
        <dbReference type="ChEBI" id="CHEBI:15378"/>
        <dbReference type="ChEBI" id="CHEBI:16240"/>
        <dbReference type="ChEBI" id="CHEBI:16526"/>
        <dbReference type="ChEBI" id="CHEBI:60344"/>
        <dbReference type="ChEBI" id="CHEBI:142463"/>
    </reaction>
    <physiologicalReaction direction="left-to-right" evidence="1">
        <dbReference type="Rhea" id="RHEA:57945"/>
    </physiologicalReaction>
</comment>
<comment type="cofactor">
    <cofactor evidence="1">
        <name>Fe-coproporphyrin III</name>
        <dbReference type="ChEBI" id="CHEBI:68438"/>
    </cofactor>
    <text evidence="1">Fe-coproporphyrin III acts both as a substrate and a redox cofactor.</text>
</comment>
<comment type="pathway">
    <text evidence="1">Porphyrin-containing compound metabolism; protoheme biosynthesis.</text>
</comment>
<comment type="similarity">
    <text evidence="1">Belongs to the ChdC family. Type 2 subfamily.</text>
</comment>
<keyword id="KW-0349">Heme</keyword>
<keyword id="KW-0350">Heme biosynthesis</keyword>
<keyword id="KW-0408">Iron</keyword>
<keyword id="KW-1017">Isopeptide bond</keyword>
<keyword id="KW-0479">Metal-binding</keyword>
<keyword id="KW-0560">Oxidoreductase</keyword>
<keyword id="KW-1185">Reference proteome</keyword>
<keyword id="KW-0832">Ubl conjugation</keyword>
<protein>
    <recommendedName>
        <fullName evidence="1">Coproheme decarboxylase</fullName>
        <ecNumber evidence="1">1.3.98.5</ecNumber>
    </recommendedName>
    <alternativeName>
        <fullName evidence="1">Coproheme III oxidative decarboxylase</fullName>
    </alternativeName>
    <alternativeName>
        <fullName evidence="1">Hydrogen peroxide-dependent heme synthase</fullName>
    </alternativeName>
</protein>
<gene>
    <name evidence="1" type="primary">chdC</name>
    <name type="ordered locus">MSMEG_2782</name>
    <name type="ordered locus">MSMEI_2713</name>
</gene>
<name>CHDC_MYCS2</name>
<proteinExistence type="evidence at protein level"/>
<feature type="chain" id="PRO_0000396083" description="Coproheme decarboxylase">
    <location>
        <begin position="1"/>
        <end position="231"/>
    </location>
</feature>
<feature type="active site" evidence="1">
    <location>
        <position position="133"/>
    </location>
</feature>
<feature type="binding site" description="axial binding residue" evidence="1">
    <location>
        <position position="156"/>
    </location>
    <ligand>
        <name>Fe-coproporphyrin III</name>
        <dbReference type="ChEBI" id="CHEBI:68438"/>
    </ligand>
    <ligandPart>
        <name>Fe</name>
        <dbReference type="ChEBI" id="CHEBI:18248"/>
    </ligandPart>
</feature>
<feature type="cross-link" description="Isoglutamyl lysine isopeptide (Lys-Gln) (interchain with Q-Cter in protein Pup)" evidence="2">
    <location>
        <position position="44"/>
    </location>
</feature>